<sequence>MTTKTRFAPSPTGFLHVGGARTALYSWLQARANNGEFVLRIEDTDIERSTQAACDAILEGMNWLGLTWDEGPYYQTKRFDRYNEIIAQMLAKGTAYKCYCSRERIDALREAQAANGEAQKYDGCCRDLPARDTDEPFVVRFKNPIGGSVVFDDHVRGRIEFSNDALDDLIIARTDGVPTYNFCVVVDDWDMGITCVVRGEDHINNTPRQINILKALGAPIPEYAHVSMILGDDGAKLSKRHGAVSVMQYRDDGYLPEALLNYLVRLGWSHGDQEIFSLEEMKQYFKLGDINKAASAFNTDKLVWLNQHYIKSLAPEYVATHLQWHMDDQKIDLSNGPALAEVVTALAERAKTLKELAASSRYFYEDFAEFDEAQAKKHLRGVALEPLQLVQQKLAALTEWTVEAIHQAIEDTATELDVGMGKVGMPLRVAVTGAGQSPGLDITLFLIGRSRSEQRISKAIEFVADRINS</sequence>
<keyword id="KW-0030">Aminoacyl-tRNA synthetase</keyword>
<keyword id="KW-0067">ATP-binding</keyword>
<keyword id="KW-0963">Cytoplasm</keyword>
<keyword id="KW-0436">Ligase</keyword>
<keyword id="KW-0479">Metal-binding</keyword>
<keyword id="KW-0547">Nucleotide-binding</keyword>
<keyword id="KW-0648">Protein biosynthesis</keyword>
<keyword id="KW-0862">Zinc</keyword>
<reference key="1">
    <citation type="submission" date="2007-07" db="EMBL/GenBank/DDBJ databases">
        <title>Complete sequence of chromosome of Shewanella baltica OS185.</title>
        <authorList>
            <consortium name="US DOE Joint Genome Institute"/>
            <person name="Copeland A."/>
            <person name="Lucas S."/>
            <person name="Lapidus A."/>
            <person name="Barry K."/>
            <person name="Glavina del Rio T."/>
            <person name="Dalin E."/>
            <person name="Tice H."/>
            <person name="Pitluck S."/>
            <person name="Sims D."/>
            <person name="Brettin T."/>
            <person name="Bruce D."/>
            <person name="Detter J.C."/>
            <person name="Han C."/>
            <person name="Schmutz J."/>
            <person name="Larimer F."/>
            <person name="Land M."/>
            <person name="Hauser L."/>
            <person name="Kyrpides N."/>
            <person name="Mikhailova N."/>
            <person name="Brettar I."/>
            <person name="Rodrigues J."/>
            <person name="Konstantinidis K."/>
            <person name="Tiedje J."/>
            <person name="Richardson P."/>
        </authorList>
    </citation>
    <scope>NUCLEOTIDE SEQUENCE [LARGE SCALE GENOMIC DNA]</scope>
    <source>
        <strain>OS185</strain>
    </source>
</reference>
<comment type="function">
    <text evidence="1">Catalyzes the attachment of glutamate to tRNA(Glu) in a two-step reaction: glutamate is first activated by ATP to form Glu-AMP and then transferred to the acceptor end of tRNA(Glu).</text>
</comment>
<comment type="catalytic activity">
    <reaction evidence="1">
        <text>tRNA(Glu) + L-glutamate + ATP = L-glutamyl-tRNA(Glu) + AMP + diphosphate</text>
        <dbReference type="Rhea" id="RHEA:23540"/>
        <dbReference type="Rhea" id="RHEA-COMP:9663"/>
        <dbReference type="Rhea" id="RHEA-COMP:9680"/>
        <dbReference type="ChEBI" id="CHEBI:29985"/>
        <dbReference type="ChEBI" id="CHEBI:30616"/>
        <dbReference type="ChEBI" id="CHEBI:33019"/>
        <dbReference type="ChEBI" id="CHEBI:78442"/>
        <dbReference type="ChEBI" id="CHEBI:78520"/>
        <dbReference type="ChEBI" id="CHEBI:456215"/>
        <dbReference type="EC" id="6.1.1.17"/>
    </reaction>
</comment>
<comment type="cofactor">
    <cofactor evidence="1">
        <name>Zn(2+)</name>
        <dbReference type="ChEBI" id="CHEBI:29105"/>
    </cofactor>
    <text evidence="1">Binds 1 zinc ion per subunit.</text>
</comment>
<comment type="subunit">
    <text evidence="1">Monomer.</text>
</comment>
<comment type="subcellular location">
    <subcellularLocation>
        <location evidence="1">Cytoplasm</location>
    </subcellularLocation>
</comment>
<comment type="similarity">
    <text evidence="1">Belongs to the class-I aminoacyl-tRNA synthetase family. Glutamate--tRNA ligase type 1 subfamily.</text>
</comment>
<accession>A6WQ67</accession>
<evidence type="ECO:0000255" key="1">
    <source>
        <dbReference type="HAMAP-Rule" id="MF_00022"/>
    </source>
</evidence>
<protein>
    <recommendedName>
        <fullName evidence="1">Glutamate--tRNA ligase</fullName>
        <ecNumber evidence="1">6.1.1.17</ecNumber>
    </recommendedName>
    <alternativeName>
        <fullName evidence="1">Glutamyl-tRNA synthetase</fullName>
        <shortName evidence="1">GluRS</shortName>
    </alternativeName>
</protein>
<name>SYE_SHEB8</name>
<gene>
    <name evidence="1" type="primary">gltX</name>
    <name type="ordered locus">Shew185_2822</name>
</gene>
<feature type="chain" id="PRO_1000001957" description="Glutamate--tRNA ligase">
    <location>
        <begin position="1"/>
        <end position="469"/>
    </location>
</feature>
<feature type="short sequence motif" description="'HIGH' region" evidence="1">
    <location>
        <begin position="9"/>
        <end position="19"/>
    </location>
</feature>
<feature type="short sequence motif" description="'KMSKS' region" evidence="1">
    <location>
        <begin position="236"/>
        <end position="240"/>
    </location>
</feature>
<feature type="binding site" evidence="1">
    <location>
        <position position="98"/>
    </location>
    <ligand>
        <name>Zn(2+)</name>
        <dbReference type="ChEBI" id="CHEBI:29105"/>
    </ligand>
</feature>
<feature type="binding site" evidence="1">
    <location>
        <position position="100"/>
    </location>
    <ligand>
        <name>Zn(2+)</name>
        <dbReference type="ChEBI" id="CHEBI:29105"/>
    </ligand>
</feature>
<feature type="binding site" evidence="1">
    <location>
        <position position="125"/>
    </location>
    <ligand>
        <name>Zn(2+)</name>
        <dbReference type="ChEBI" id="CHEBI:29105"/>
    </ligand>
</feature>
<feature type="binding site" evidence="1">
    <location>
        <position position="127"/>
    </location>
    <ligand>
        <name>Zn(2+)</name>
        <dbReference type="ChEBI" id="CHEBI:29105"/>
    </ligand>
</feature>
<feature type="binding site" evidence="1">
    <location>
        <position position="239"/>
    </location>
    <ligand>
        <name>ATP</name>
        <dbReference type="ChEBI" id="CHEBI:30616"/>
    </ligand>
</feature>
<proteinExistence type="inferred from homology"/>
<organism>
    <name type="scientific">Shewanella baltica (strain OS185)</name>
    <dbReference type="NCBI Taxonomy" id="402882"/>
    <lineage>
        <taxon>Bacteria</taxon>
        <taxon>Pseudomonadati</taxon>
        <taxon>Pseudomonadota</taxon>
        <taxon>Gammaproteobacteria</taxon>
        <taxon>Alteromonadales</taxon>
        <taxon>Shewanellaceae</taxon>
        <taxon>Shewanella</taxon>
    </lineage>
</organism>
<dbReference type="EC" id="6.1.1.17" evidence="1"/>
<dbReference type="EMBL" id="CP000753">
    <property type="protein sequence ID" value="ABS08956.1"/>
    <property type="molecule type" value="Genomic_DNA"/>
</dbReference>
<dbReference type="RefSeq" id="WP_006082293.1">
    <property type="nucleotide sequence ID" value="NC_009665.1"/>
</dbReference>
<dbReference type="SMR" id="A6WQ67"/>
<dbReference type="GeneID" id="11773029"/>
<dbReference type="KEGG" id="sbm:Shew185_2822"/>
<dbReference type="HOGENOM" id="CLU_015768_6_3_6"/>
<dbReference type="GO" id="GO:0005829">
    <property type="term" value="C:cytosol"/>
    <property type="evidence" value="ECO:0007669"/>
    <property type="project" value="TreeGrafter"/>
</dbReference>
<dbReference type="GO" id="GO:0005524">
    <property type="term" value="F:ATP binding"/>
    <property type="evidence" value="ECO:0007669"/>
    <property type="project" value="UniProtKB-UniRule"/>
</dbReference>
<dbReference type="GO" id="GO:0004818">
    <property type="term" value="F:glutamate-tRNA ligase activity"/>
    <property type="evidence" value="ECO:0007669"/>
    <property type="project" value="UniProtKB-UniRule"/>
</dbReference>
<dbReference type="GO" id="GO:0000049">
    <property type="term" value="F:tRNA binding"/>
    <property type="evidence" value="ECO:0007669"/>
    <property type="project" value="InterPro"/>
</dbReference>
<dbReference type="GO" id="GO:0008270">
    <property type="term" value="F:zinc ion binding"/>
    <property type="evidence" value="ECO:0007669"/>
    <property type="project" value="UniProtKB-UniRule"/>
</dbReference>
<dbReference type="GO" id="GO:0006424">
    <property type="term" value="P:glutamyl-tRNA aminoacylation"/>
    <property type="evidence" value="ECO:0007669"/>
    <property type="project" value="UniProtKB-UniRule"/>
</dbReference>
<dbReference type="CDD" id="cd00808">
    <property type="entry name" value="GluRS_core"/>
    <property type="match status" value="1"/>
</dbReference>
<dbReference type="FunFam" id="1.10.10.350:FF:000001">
    <property type="entry name" value="Glutamate--tRNA ligase"/>
    <property type="match status" value="1"/>
</dbReference>
<dbReference type="FunFam" id="3.40.50.620:FF:000007">
    <property type="entry name" value="Glutamate--tRNA ligase"/>
    <property type="match status" value="1"/>
</dbReference>
<dbReference type="Gene3D" id="1.10.10.350">
    <property type="match status" value="1"/>
</dbReference>
<dbReference type="Gene3D" id="3.40.50.620">
    <property type="entry name" value="HUPs"/>
    <property type="match status" value="1"/>
</dbReference>
<dbReference type="HAMAP" id="MF_00022">
    <property type="entry name" value="Glu_tRNA_synth_type1"/>
    <property type="match status" value="1"/>
</dbReference>
<dbReference type="InterPro" id="IPR045462">
    <property type="entry name" value="aa-tRNA-synth_I_cd-bd"/>
</dbReference>
<dbReference type="InterPro" id="IPR020751">
    <property type="entry name" value="aa-tRNA-synth_I_codon-bd_sub2"/>
</dbReference>
<dbReference type="InterPro" id="IPR001412">
    <property type="entry name" value="aa-tRNA-synth_I_CS"/>
</dbReference>
<dbReference type="InterPro" id="IPR008925">
    <property type="entry name" value="aa_tRNA-synth_I_cd-bd_sf"/>
</dbReference>
<dbReference type="InterPro" id="IPR004527">
    <property type="entry name" value="Glu-tRNA-ligase_bac/mito"/>
</dbReference>
<dbReference type="InterPro" id="IPR000924">
    <property type="entry name" value="Glu/Gln-tRNA-synth"/>
</dbReference>
<dbReference type="InterPro" id="IPR020058">
    <property type="entry name" value="Glu/Gln-tRNA-synth_Ib_cat-dom"/>
</dbReference>
<dbReference type="InterPro" id="IPR049940">
    <property type="entry name" value="GluQ/Sye"/>
</dbReference>
<dbReference type="InterPro" id="IPR033910">
    <property type="entry name" value="GluRS_core"/>
</dbReference>
<dbReference type="InterPro" id="IPR014729">
    <property type="entry name" value="Rossmann-like_a/b/a_fold"/>
</dbReference>
<dbReference type="NCBIfam" id="TIGR00464">
    <property type="entry name" value="gltX_bact"/>
    <property type="match status" value="1"/>
</dbReference>
<dbReference type="PANTHER" id="PTHR43311">
    <property type="entry name" value="GLUTAMATE--TRNA LIGASE"/>
    <property type="match status" value="1"/>
</dbReference>
<dbReference type="PANTHER" id="PTHR43311:SF2">
    <property type="entry name" value="GLUTAMATE--TRNA LIGASE, MITOCHONDRIAL-RELATED"/>
    <property type="match status" value="1"/>
</dbReference>
<dbReference type="Pfam" id="PF19269">
    <property type="entry name" value="Anticodon_2"/>
    <property type="match status" value="1"/>
</dbReference>
<dbReference type="Pfam" id="PF00749">
    <property type="entry name" value="tRNA-synt_1c"/>
    <property type="match status" value="1"/>
</dbReference>
<dbReference type="PRINTS" id="PR00987">
    <property type="entry name" value="TRNASYNTHGLU"/>
</dbReference>
<dbReference type="SUPFAM" id="SSF48163">
    <property type="entry name" value="An anticodon-binding domain of class I aminoacyl-tRNA synthetases"/>
    <property type="match status" value="1"/>
</dbReference>
<dbReference type="SUPFAM" id="SSF52374">
    <property type="entry name" value="Nucleotidylyl transferase"/>
    <property type="match status" value="1"/>
</dbReference>
<dbReference type="PROSITE" id="PS00178">
    <property type="entry name" value="AA_TRNA_LIGASE_I"/>
    <property type="match status" value="1"/>
</dbReference>